<sequence length="176" mass="20039">MKSLVLYSSLTGNTKKIAYTIYDEIQEEKDIKDVNELVDYGIDYENYDIVFLGYWVDKGICDKNSKQVLENIHNKKIALFGTMGASEKGSYGASIIEKIESIIPKDNEILGSFICQGKIAEGLKAKYKEMLKLSPDNEHIRQQLNNHEESQSHPDEQEIYEASMFAKNMMIKASIV</sequence>
<gene>
    <name evidence="2" type="primary">bilS</name>
    <name type="ORF">QAO_2846</name>
</gene>
<comment type="function">
    <text evidence="1">Together with BilR, catalyzes reduction of mesobilirubin and/or bilirubin to urobilinogen, a key step during heme degradation (PubMed:38172624). BilS is probably involved in electron transfer for the bilirubin reductase BilR (PubMed:38172624).</text>
</comment>
<comment type="pathway">
    <text evidence="1">Porphyrin-containing compound metabolism; protoheme degradation.</text>
</comment>
<dbReference type="EMBL" id="AVGI01000263">
    <property type="protein sequence ID" value="EQE01909.1"/>
    <property type="molecule type" value="Genomic_DNA"/>
</dbReference>
<dbReference type="RefSeq" id="WP_021359616.1">
    <property type="nucleotide sequence ID" value="NZ_AVGI01000263.1"/>
</dbReference>
<dbReference type="SMR" id="P0DXD1"/>
<dbReference type="UniPathway" id="UPA00684"/>
<dbReference type="GO" id="GO:0009055">
    <property type="term" value="F:electron transfer activity"/>
    <property type="evidence" value="ECO:0007669"/>
    <property type="project" value="InterPro"/>
</dbReference>
<dbReference type="GO" id="GO:0010181">
    <property type="term" value="F:FMN binding"/>
    <property type="evidence" value="ECO:0007669"/>
    <property type="project" value="InterPro"/>
</dbReference>
<dbReference type="GO" id="GO:0070819">
    <property type="term" value="F:menaquinone-dependent protoporphyrinogen oxidase activity"/>
    <property type="evidence" value="ECO:0007669"/>
    <property type="project" value="TreeGrafter"/>
</dbReference>
<dbReference type="GO" id="GO:0016651">
    <property type="term" value="F:oxidoreductase activity, acting on NAD(P)H"/>
    <property type="evidence" value="ECO:0007669"/>
    <property type="project" value="UniProtKB-ARBA"/>
</dbReference>
<dbReference type="GO" id="GO:0006783">
    <property type="term" value="P:heme biosynthetic process"/>
    <property type="evidence" value="ECO:0007669"/>
    <property type="project" value="TreeGrafter"/>
</dbReference>
<dbReference type="Gene3D" id="3.40.50.360">
    <property type="match status" value="1"/>
</dbReference>
<dbReference type="InterPro" id="IPR054633">
    <property type="entry name" value="BilS"/>
</dbReference>
<dbReference type="InterPro" id="IPR008254">
    <property type="entry name" value="Flavodoxin/NO_synth"/>
</dbReference>
<dbReference type="InterPro" id="IPR001226">
    <property type="entry name" value="Flavodoxin_CS"/>
</dbReference>
<dbReference type="InterPro" id="IPR029039">
    <property type="entry name" value="Flavoprotein-like_sf"/>
</dbReference>
<dbReference type="InterPro" id="IPR052200">
    <property type="entry name" value="Protoporphyrinogen_IX_DH"/>
</dbReference>
<dbReference type="NCBIfam" id="NF045594">
    <property type="entry name" value="flavodox_BilS"/>
    <property type="match status" value="1"/>
</dbReference>
<dbReference type="PANTHER" id="PTHR38030">
    <property type="entry name" value="PROTOPORPHYRINOGEN IX DEHYDROGENASE [MENAQUINONE]"/>
    <property type="match status" value="1"/>
</dbReference>
<dbReference type="PANTHER" id="PTHR38030:SF2">
    <property type="entry name" value="PROTOPORPHYRINOGEN IX DEHYDROGENASE [QUINONE]"/>
    <property type="match status" value="1"/>
</dbReference>
<dbReference type="Pfam" id="PF12641">
    <property type="entry name" value="Flavodoxin_3"/>
    <property type="match status" value="1"/>
</dbReference>
<dbReference type="SUPFAM" id="SSF52218">
    <property type="entry name" value="Flavoproteins"/>
    <property type="match status" value="1"/>
</dbReference>
<organism>
    <name type="scientific">Clostridioides difficile (strain CD3)</name>
    <dbReference type="NCBI Taxonomy" id="1151252"/>
    <lineage>
        <taxon>Bacteria</taxon>
        <taxon>Bacillati</taxon>
        <taxon>Bacillota</taxon>
        <taxon>Clostridia</taxon>
        <taxon>Peptostreptococcales</taxon>
        <taxon>Peptostreptococcaceae</taxon>
        <taxon>Clostridioides</taxon>
    </lineage>
</organism>
<feature type="chain" id="PRO_0000460432" description="Flavodoxin-like domain-containing protein BilS">
    <location>
        <begin position="1"/>
        <end position="176"/>
    </location>
</feature>
<accession>P0DXD1</accession>
<protein>
    <recommendedName>
        <fullName evidence="3">Flavodoxin-like domain-containing protein BilS</fullName>
    </recommendedName>
    <alternativeName>
        <fullName evidence="2">Bilirubin reductase operon protein S</fullName>
    </alternativeName>
</protein>
<reference key="1">
    <citation type="submission" date="2013-06" db="EMBL/GenBank/DDBJ databases">
        <authorList>
            <person name="Walk S."/>
            <person name="Aronoff D."/>
            <person name="Young V.Y."/>
            <person name="Marsh J."/>
            <person name="Harrison L."/>
            <person name="Daugherty S.C."/>
            <person name="Shefchek K.A."/>
            <person name="Hine E.E."/>
            <person name="Tallon L.J."/>
            <person name="Sadzewicz L.K."/>
            <person name="Rasko D.A."/>
        </authorList>
    </citation>
    <scope>NUCLEOTIDE SEQUENCE [LARGE SCALE GENOMIC DNA]</scope>
    <source>
        <strain>CD3</strain>
    </source>
</reference>
<reference key="2">
    <citation type="journal article" date="2024" name="Nat. Microbiol.">
        <title>BilR is a gut microbial enzyme that reduces bilirubin to urobilinogen.</title>
        <authorList>
            <person name="Hall B."/>
            <person name="Levy S."/>
            <person name="Dufault-Thompson K."/>
            <person name="Arp G."/>
            <person name="Zhong A."/>
            <person name="Ndjite G.M."/>
            <person name="Weiss A."/>
            <person name="Braccia D."/>
            <person name="Jenkins C."/>
            <person name="Grant M.R."/>
            <person name="Abeysinghe S."/>
            <person name="Yang Y."/>
            <person name="Jermain M.D."/>
            <person name="Wu C.H."/>
            <person name="Ma B."/>
            <person name="Jiang X."/>
        </authorList>
    </citation>
    <scope>FUNCTION</scope>
    <scope>PATHWAY</scope>
</reference>
<name>BILS_CLOD3</name>
<proteinExistence type="predicted"/>
<evidence type="ECO:0000269" key="1">
    <source>
    </source>
</evidence>
<evidence type="ECO:0000303" key="2">
    <source>
    </source>
</evidence>
<evidence type="ECO:0000305" key="3"/>